<feature type="chain" id="PRO_0000433424" description="Syndetin">
    <location>
        <begin position="1"/>
        <end position="964"/>
    </location>
</feature>
<feature type="region of interest" description="Disordered" evidence="3">
    <location>
        <begin position="1"/>
        <end position="25"/>
    </location>
</feature>
<feature type="region of interest" description="Disordered" evidence="3">
    <location>
        <begin position="532"/>
        <end position="563"/>
    </location>
</feature>
<feature type="coiled-coil region" evidence="2">
    <location>
        <begin position="81"/>
        <end position="107"/>
    </location>
</feature>
<feature type="coiled-coil region" evidence="2">
    <location>
        <begin position="216"/>
        <end position="244"/>
    </location>
</feature>
<feature type="modified residue" description="N-acetylmethionine" evidence="1">
    <location>
        <position position="1"/>
    </location>
</feature>
<feature type="modified residue" description="Phosphoserine" evidence="10">
    <location>
        <position position="15"/>
    </location>
</feature>
<feature type="modified residue" description="Phosphoserine" evidence="10">
    <location>
        <position position="494"/>
    </location>
</feature>
<feature type="modified residue" description="Phosphoserine" evidence="10">
    <location>
        <position position="498"/>
    </location>
</feature>
<feature type="modified residue" description="Phosphoserine" evidence="10">
    <location>
        <position position="559"/>
    </location>
</feature>
<feature type="modified residue" description="Phosphoserine" evidence="10">
    <location>
        <position position="561"/>
    </location>
</feature>
<feature type="cross-link" description="Glycyl lysine isopeptide (Lys-Gly) (interchain with G-Cter in SUMO1); alternate" evidence="1">
    <location>
        <position position="963"/>
    </location>
</feature>
<feature type="cross-link" description="Glycyl lysine isopeptide (Lys-Gly) (interchain with G-Cter in SUMO2); alternate" evidence="1">
    <location>
        <position position="963"/>
    </location>
</feature>
<comment type="function">
    <text evidence="1">Acts as a component of the EARP complex that is involved in endocytic recycling. The EARP complex associates with Rab4-positive endosomes and promotes recycling of internalized transferrin receptor (TFRC) to the plasma membrane. Within the EARP complex, required to tether the complex to recycling endosomes. Not involved in retrograde transport from early and late endosomes to the trans-Golgi network (TGN).</text>
</comment>
<comment type="subunit">
    <text evidence="1 5 6">Component of the endosome-associated retrograde protein (EARP) complex, composed of VPS51, VPS52, VPS53 and VPS50/Syndetin (By similarity). The EARP complex interacts with EIPR1 (PubMed:27191843, PubMed:27440922). Interacts with VPS51 and VPS53 in an EIPR1-independent manner (By similarity).</text>
</comment>
<comment type="subcellular location">
    <subcellularLocation>
        <location evidence="4">Recycling endosome</location>
    </subcellularLocation>
    <subcellularLocation>
        <location evidence="7">Membrane</location>
    </subcellularLocation>
    <text evidence="7">Associates with membranes in an EIPR1-dependent manner.</text>
</comment>
<comment type="tissue specificity">
    <text evidence="6">Expressed in the brain (at protein level).</text>
</comment>
<comment type="similarity">
    <text evidence="8">Belongs to the syndetin family.</text>
</comment>
<accession>F1LSG8</accession>
<sequence>MQKIKSLMTRQGLKSPPESLNDLGAFESLRVPGKEEFRELREQPSDPQAEQELINSIEQVYFSADPFDIVKYELEKLPPVLNLQELEEYRDKLKQQQAAVSKKVADLILEKQPAYVKELERVTSLQTGLQLAAVICTNSRRHLNIAKEGFTQASLGLLANQRKRQLLIGLLKSLRTIKTLQRTDVRLSEMLEEEDYPGAIQLCLECQKAASTFKHYSCISELNSKLQDTLEQIEEQLDVALSKICKNFDVNHYTKVQQAYRLLGKTQTAMDQLHMHFTQAIHNTVFQVVLGYVELCAGNTDTKFQKLQYKDLCTHVTPDSYIPCLADLCKALWEVMLSYYRTMEWHEKHDSEETAAASEGSNVMSTEETNFDRGYVKKKLEHGLTRIWQDVQLKVKTYLLGTDLSIFKYDDFIFVLDIVSRLMQVGEEFCGSKSEVLQESIRKQSINYFKNHHRIRLDELRMFLENETWELCPVKSNFSILQLHEFKFLEQSRSPSVSPSKQPSATSSKPVTLFEQYCSGGNPFEIQADHKDEETEDVLASNGYESDEQEKSAYQDYDSDSDVPEELKRDYVDEQTGDVPVKSVSRETLKSRKKSDYSLNKVNAPILTNTTLNVIRLVGKYMQMMNILKPIAFDVIHFMSQLFDYYLYAIYTFFGRNDSLESTGLGLSSSRLRTTLNRIQESLIDLEGSADPTATLTAAEERKEKVPSPHLNQLVILTSGDTLYGLAERVVATESLVFLAEQFEFLQPHLDAVMPAVKKPFLQQFYSQTVSTASELRKPIYWIVAGKAIDYEQMLLLMTNVKWDVKEIMSQHNVYVDALLKEFEQFNKRLNEVSKRVRIPLPVSNILWEHCIRLANRTIVEGYANVKKCSNEGRALMQLDFQQFLMKLEKLTDIRPIPDKEFVEIYIKAYYLTENDMERWIKEHREYSTKQLTNLVNVCLGSHINKKARQKLLAAIDDIDRPKR</sequence>
<keyword id="KW-0007">Acetylation</keyword>
<keyword id="KW-0175">Coiled coil</keyword>
<keyword id="KW-0967">Endosome</keyword>
<keyword id="KW-1017">Isopeptide bond</keyword>
<keyword id="KW-0472">Membrane</keyword>
<keyword id="KW-0597">Phosphoprotein</keyword>
<keyword id="KW-0653">Protein transport</keyword>
<keyword id="KW-1185">Reference proteome</keyword>
<keyword id="KW-0813">Transport</keyword>
<keyword id="KW-0832">Ubl conjugation</keyword>
<gene>
    <name evidence="9" type="primary">Vps50</name>
    <name evidence="9" type="synonym">Ccdc132</name>
</gene>
<protein>
    <recommendedName>
        <fullName evidence="1">Syndetin</fullName>
    </recommendedName>
    <alternativeName>
        <fullName evidence="8">Coiled-coil domain-containing protein 132</fullName>
    </alternativeName>
    <alternativeName>
        <fullName evidence="9">EARP/GARPII complex subunit VPS50</fullName>
    </alternativeName>
</protein>
<evidence type="ECO:0000250" key="1">
    <source>
        <dbReference type="UniProtKB" id="Q96JG6"/>
    </source>
</evidence>
<evidence type="ECO:0000255" key="2"/>
<evidence type="ECO:0000256" key="3">
    <source>
        <dbReference type="SAM" id="MobiDB-lite"/>
    </source>
</evidence>
<evidence type="ECO:0000269" key="4">
    <source>
    </source>
</evidence>
<evidence type="ECO:0000269" key="5">
    <source>
    </source>
</evidence>
<evidence type="ECO:0000269" key="6">
    <source>
    </source>
</evidence>
<evidence type="ECO:0000269" key="7">
    <source>
    </source>
</evidence>
<evidence type="ECO:0000305" key="8"/>
<evidence type="ECO:0000312" key="9">
    <source>
        <dbReference type="RGD" id="1304751"/>
    </source>
</evidence>
<evidence type="ECO:0007744" key="10">
    <source>
    </source>
</evidence>
<name>VPS50_RAT</name>
<reference key="1">
    <citation type="journal article" date="2004" name="Nature">
        <title>Genome sequence of the Brown Norway rat yields insights into mammalian evolution.</title>
        <authorList>
            <person name="Gibbs R.A."/>
            <person name="Weinstock G.M."/>
            <person name="Metzker M.L."/>
            <person name="Muzny D.M."/>
            <person name="Sodergren E.J."/>
            <person name="Scherer S."/>
            <person name="Scott G."/>
            <person name="Steffen D."/>
            <person name="Worley K.C."/>
            <person name="Burch P.E."/>
            <person name="Okwuonu G."/>
            <person name="Hines S."/>
            <person name="Lewis L."/>
            <person name="Deramo C."/>
            <person name="Delgado O."/>
            <person name="Dugan-Rocha S."/>
            <person name="Miner G."/>
            <person name="Morgan M."/>
            <person name="Hawes A."/>
            <person name="Gill R."/>
            <person name="Holt R.A."/>
            <person name="Adams M.D."/>
            <person name="Amanatides P.G."/>
            <person name="Baden-Tillson H."/>
            <person name="Barnstead M."/>
            <person name="Chin S."/>
            <person name="Evans C.A."/>
            <person name="Ferriera S."/>
            <person name="Fosler C."/>
            <person name="Glodek A."/>
            <person name="Gu Z."/>
            <person name="Jennings D."/>
            <person name="Kraft C.L."/>
            <person name="Nguyen T."/>
            <person name="Pfannkoch C.M."/>
            <person name="Sitter C."/>
            <person name="Sutton G.G."/>
            <person name="Venter J.C."/>
            <person name="Woodage T."/>
            <person name="Smith D."/>
            <person name="Lee H.-M."/>
            <person name="Gustafson E."/>
            <person name="Cahill P."/>
            <person name="Kana A."/>
            <person name="Doucette-Stamm L."/>
            <person name="Weinstock K."/>
            <person name="Fechtel K."/>
            <person name="Weiss R.B."/>
            <person name="Dunn D.M."/>
            <person name="Green E.D."/>
            <person name="Blakesley R.W."/>
            <person name="Bouffard G.G."/>
            <person name="De Jong P.J."/>
            <person name="Osoegawa K."/>
            <person name="Zhu B."/>
            <person name="Marra M."/>
            <person name="Schein J."/>
            <person name="Bosdet I."/>
            <person name="Fjell C."/>
            <person name="Jones S."/>
            <person name="Krzywinski M."/>
            <person name="Mathewson C."/>
            <person name="Siddiqui A."/>
            <person name="Wye N."/>
            <person name="McPherson J."/>
            <person name="Zhao S."/>
            <person name="Fraser C.M."/>
            <person name="Shetty J."/>
            <person name="Shatsman S."/>
            <person name="Geer K."/>
            <person name="Chen Y."/>
            <person name="Abramzon S."/>
            <person name="Nierman W.C."/>
            <person name="Havlak P.H."/>
            <person name="Chen R."/>
            <person name="Durbin K.J."/>
            <person name="Egan A."/>
            <person name="Ren Y."/>
            <person name="Song X.-Z."/>
            <person name="Li B."/>
            <person name="Liu Y."/>
            <person name="Qin X."/>
            <person name="Cawley S."/>
            <person name="Cooney A.J."/>
            <person name="D'Souza L.M."/>
            <person name="Martin K."/>
            <person name="Wu J.Q."/>
            <person name="Gonzalez-Garay M.L."/>
            <person name="Jackson A.R."/>
            <person name="Kalafus K.J."/>
            <person name="McLeod M.P."/>
            <person name="Milosavljevic A."/>
            <person name="Virk D."/>
            <person name="Volkov A."/>
            <person name="Wheeler D.A."/>
            <person name="Zhang Z."/>
            <person name="Bailey J.A."/>
            <person name="Eichler E.E."/>
            <person name="Tuzun E."/>
            <person name="Birney E."/>
            <person name="Mongin E."/>
            <person name="Ureta-Vidal A."/>
            <person name="Woodwark C."/>
            <person name="Zdobnov E."/>
            <person name="Bork P."/>
            <person name="Suyama M."/>
            <person name="Torrents D."/>
            <person name="Alexandersson M."/>
            <person name="Trask B.J."/>
            <person name="Young J.M."/>
            <person name="Huang H."/>
            <person name="Wang H."/>
            <person name="Xing H."/>
            <person name="Daniels S."/>
            <person name="Gietzen D."/>
            <person name="Schmidt J."/>
            <person name="Stevens K."/>
            <person name="Vitt U."/>
            <person name="Wingrove J."/>
            <person name="Camara F."/>
            <person name="Mar Alba M."/>
            <person name="Abril J.F."/>
            <person name="Guigo R."/>
            <person name="Smit A."/>
            <person name="Dubchak I."/>
            <person name="Rubin E.M."/>
            <person name="Couronne O."/>
            <person name="Poliakov A."/>
            <person name="Huebner N."/>
            <person name="Ganten D."/>
            <person name="Goesele C."/>
            <person name="Hummel O."/>
            <person name="Kreitler T."/>
            <person name="Lee Y.-A."/>
            <person name="Monti J."/>
            <person name="Schulz H."/>
            <person name="Zimdahl H."/>
            <person name="Himmelbauer H."/>
            <person name="Lehrach H."/>
            <person name="Jacob H.J."/>
            <person name="Bromberg S."/>
            <person name="Gullings-Handley J."/>
            <person name="Jensen-Seaman M.I."/>
            <person name="Kwitek A.E."/>
            <person name="Lazar J."/>
            <person name="Pasko D."/>
            <person name="Tonellato P.J."/>
            <person name="Twigger S."/>
            <person name="Ponting C.P."/>
            <person name="Duarte J.M."/>
            <person name="Rice S."/>
            <person name="Goodstadt L."/>
            <person name="Beatson S.A."/>
            <person name="Emes R.D."/>
            <person name="Winter E.E."/>
            <person name="Webber C."/>
            <person name="Brandt P."/>
            <person name="Nyakatura G."/>
            <person name="Adetobi M."/>
            <person name="Chiaromonte F."/>
            <person name="Elnitski L."/>
            <person name="Eswara P."/>
            <person name="Hardison R.C."/>
            <person name="Hou M."/>
            <person name="Kolbe D."/>
            <person name="Makova K."/>
            <person name="Miller W."/>
            <person name="Nekrutenko A."/>
            <person name="Riemer C."/>
            <person name="Schwartz S."/>
            <person name="Taylor J."/>
            <person name="Yang S."/>
            <person name="Zhang Y."/>
            <person name="Lindpaintner K."/>
            <person name="Andrews T.D."/>
            <person name="Caccamo M."/>
            <person name="Clamp M."/>
            <person name="Clarke L."/>
            <person name="Curwen V."/>
            <person name="Durbin R.M."/>
            <person name="Eyras E."/>
            <person name="Searle S.M."/>
            <person name="Cooper G.M."/>
            <person name="Batzoglou S."/>
            <person name="Brudno M."/>
            <person name="Sidow A."/>
            <person name="Stone E.A."/>
            <person name="Payseur B.A."/>
            <person name="Bourque G."/>
            <person name="Lopez-Otin C."/>
            <person name="Puente X.S."/>
            <person name="Chakrabarti K."/>
            <person name="Chatterji S."/>
            <person name="Dewey C."/>
            <person name="Pachter L."/>
            <person name="Bray N."/>
            <person name="Yap V.B."/>
            <person name="Caspi A."/>
            <person name="Tesler G."/>
            <person name="Pevzner P.A."/>
            <person name="Haussler D."/>
            <person name="Roskin K.M."/>
            <person name="Baertsch R."/>
            <person name="Clawson H."/>
            <person name="Furey T.S."/>
            <person name="Hinrichs A.S."/>
            <person name="Karolchik D."/>
            <person name="Kent W.J."/>
            <person name="Rosenbloom K.R."/>
            <person name="Trumbower H."/>
            <person name="Weirauch M."/>
            <person name="Cooper D.N."/>
            <person name="Stenson P.D."/>
            <person name="Ma B."/>
            <person name="Brent M."/>
            <person name="Arumugam M."/>
            <person name="Shteynberg D."/>
            <person name="Copley R.R."/>
            <person name="Taylor M.S."/>
            <person name="Riethman H."/>
            <person name="Mudunuri U."/>
            <person name="Peterson J."/>
            <person name="Guyer M."/>
            <person name="Felsenfeld A."/>
            <person name="Old S."/>
            <person name="Mockrin S."/>
            <person name="Collins F.S."/>
        </authorList>
    </citation>
    <scope>NUCLEOTIDE SEQUENCE [LARGE SCALE GENOMIC DNA]</scope>
    <source>
        <strain>Brown Norway</strain>
    </source>
</reference>
<reference key="2">
    <citation type="journal article" date="2012" name="Nat. Commun.">
        <title>Quantitative maps of protein phosphorylation sites across 14 different rat organs and tissues.</title>
        <authorList>
            <person name="Lundby A."/>
            <person name="Secher A."/>
            <person name="Lage K."/>
            <person name="Nordsborg N.B."/>
            <person name="Dmytriyev A."/>
            <person name="Lundby C."/>
            <person name="Olsen J.V."/>
        </authorList>
    </citation>
    <scope>PHOSPHORYLATION [LARGE SCALE ANALYSIS] AT SER-15; SER-494; SER-498; SER-559 AND SER-561</scope>
    <scope>IDENTIFICATION BY MASS SPECTROMETRY [LARGE SCALE ANALYSIS]</scope>
</reference>
<reference key="3">
    <citation type="journal article" date="2015" name="Nat. Cell Biol.">
        <title>EARP is a multisubunit tethering complex involved in endocytic recycling.</title>
        <authorList>
            <person name="Schindler C."/>
            <person name="Chen Y."/>
            <person name="Pu J."/>
            <person name="Guo X."/>
            <person name="Bonifacino J.S."/>
        </authorList>
    </citation>
    <scope>SUBCELLULAR LOCATION</scope>
</reference>
<reference key="4">
    <citation type="journal article" date="2016" name="PLoS Genet.">
        <title>The EARP complex and its interactor eipr-1 are required for cargo sorting to dense-core vesicles.</title>
        <authorList>
            <person name="Topalidou I."/>
            <person name="Cattin-Ortola J."/>
            <person name="Pappas A.L."/>
            <person name="Cooper K."/>
            <person name="Merrihew G.E."/>
            <person name="MacCoss M.J."/>
            <person name="Ailion M."/>
        </authorList>
    </citation>
    <scope>INTERACTION WITH EIPR1</scope>
</reference>
<reference key="5">
    <citation type="journal article" date="2016" name="Mol. Biol. Cell">
        <title>TSSC1 is novel component of the endosomal retrieval machinery.</title>
        <authorList>
            <person name="Gershlick D.C."/>
            <person name="Schindler C."/>
            <person name="Chen Y."/>
            <person name="Bonifacino J.S."/>
        </authorList>
    </citation>
    <scope>INTERACTION WITH EIPR1</scope>
    <scope>TISSUE SPECIFICITY</scope>
</reference>
<reference key="6">
    <citation type="journal article" date="2020" name="Mol. Biol. Cell">
        <title>EIPR1 controls dense-core vesicle cargo retention and EARP complex localization in insulin-secreting cells.</title>
        <authorList>
            <person name="Topalidou I."/>
            <person name="Cattin-Ortola J."/>
            <person name="Hummer B."/>
            <person name="Asensio C.S."/>
            <person name="Ailion M."/>
        </authorList>
    </citation>
    <scope>SUBCELLULAR LOCATION</scope>
</reference>
<dbReference type="EMBL" id="AABR06029416">
    <property type="status" value="NOT_ANNOTATED_CDS"/>
    <property type="molecule type" value="Genomic_DNA"/>
</dbReference>
<dbReference type="EMBL" id="AABR06029417">
    <property type="status" value="NOT_ANNOTATED_CDS"/>
    <property type="molecule type" value="Genomic_DNA"/>
</dbReference>
<dbReference type="EMBL" id="AABR06029418">
    <property type="status" value="NOT_ANNOTATED_CDS"/>
    <property type="molecule type" value="Genomic_DNA"/>
</dbReference>
<dbReference type="RefSeq" id="NP_001166982.1">
    <property type="nucleotide sequence ID" value="NM_001173511.1"/>
</dbReference>
<dbReference type="SMR" id="F1LSG8"/>
<dbReference type="DIP" id="DIP-61632N"/>
<dbReference type="FunCoup" id="F1LSG8">
    <property type="interactions" value="4473"/>
</dbReference>
<dbReference type="IntAct" id="F1LSG8">
    <property type="interactions" value="3"/>
</dbReference>
<dbReference type="STRING" id="10116.ENSRNOP00000059003"/>
<dbReference type="iPTMnet" id="F1LSG8"/>
<dbReference type="PhosphoSitePlus" id="F1LSG8"/>
<dbReference type="jPOST" id="F1LSG8"/>
<dbReference type="PaxDb" id="10116-ENSRNOP00000059003"/>
<dbReference type="Ensembl" id="ENSRNOT00000067087.3">
    <property type="protein sequence ID" value="ENSRNOP00000059003.1"/>
    <property type="gene ID" value="ENSRNOG00000009894.7"/>
</dbReference>
<dbReference type="GeneID" id="312083"/>
<dbReference type="KEGG" id="rno:312083"/>
<dbReference type="AGR" id="RGD:1304751"/>
<dbReference type="CTD" id="55610"/>
<dbReference type="RGD" id="1304751">
    <property type="gene designation" value="Vps50"/>
</dbReference>
<dbReference type="eggNOG" id="KOG2939">
    <property type="taxonomic scope" value="Eukaryota"/>
</dbReference>
<dbReference type="GeneTree" id="ENSGT00390000003442"/>
<dbReference type="HOGENOM" id="CLU_009513_1_0_1"/>
<dbReference type="InParanoid" id="F1LSG8"/>
<dbReference type="OMA" id="MAKVKWD"/>
<dbReference type="OrthoDB" id="10263345at2759"/>
<dbReference type="PRO" id="PR:F1LSG8"/>
<dbReference type="Proteomes" id="UP000002494">
    <property type="component" value="Chromosome 4"/>
</dbReference>
<dbReference type="Bgee" id="ENSRNOG00000009894">
    <property type="expression patterns" value="Expressed in quadriceps femoris and 19 other cell types or tissues"/>
</dbReference>
<dbReference type="GO" id="GO:1990745">
    <property type="term" value="C:EARP complex"/>
    <property type="evidence" value="ECO:0000250"/>
    <property type="project" value="UniProtKB"/>
</dbReference>
<dbReference type="GO" id="GO:0016020">
    <property type="term" value="C:membrane"/>
    <property type="evidence" value="ECO:0000314"/>
    <property type="project" value="UniProtKB"/>
</dbReference>
<dbReference type="GO" id="GO:0048471">
    <property type="term" value="C:perinuclear region of cytoplasm"/>
    <property type="evidence" value="ECO:0000314"/>
    <property type="project" value="UniProtKB"/>
</dbReference>
<dbReference type="GO" id="GO:0055037">
    <property type="term" value="C:recycling endosome"/>
    <property type="evidence" value="ECO:0000314"/>
    <property type="project" value="MGI"/>
</dbReference>
<dbReference type="GO" id="GO:0000149">
    <property type="term" value="F:SNARE binding"/>
    <property type="evidence" value="ECO:0000266"/>
    <property type="project" value="RGD"/>
</dbReference>
<dbReference type="GO" id="GO:0032456">
    <property type="term" value="P:endocytic recycling"/>
    <property type="evidence" value="ECO:0000250"/>
    <property type="project" value="UniProtKB"/>
</dbReference>
<dbReference type="GO" id="GO:0015031">
    <property type="term" value="P:protein transport"/>
    <property type="evidence" value="ECO:0007669"/>
    <property type="project" value="UniProtKB-KW"/>
</dbReference>
<dbReference type="InterPro" id="IPR019514">
    <property type="entry name" value="Syndetin_C"/>
</dbReference>
<dbReference type="InterPro" id="IPR040047">
    <property type="entry name" value="VPS50"/>
</dbReference>
<dbReference type="InterPro" id="IPR019515">
    <property type="entry name" value="VPS54_N"/>
</dbReference>
<dbReference type="PANTHER" id="PTHR13258">
    <property type="entry name" value="SYNDETIN"/>
    <property type="match status" value="1"/>
</dbReference>
<dbReference type="PANTHER" id="PTHR13258:SF0">
    <property type="entry name" value="SYNDETIN"/>
    <property type="match status" value="1"/>
</dbReference>
<dbReference type="Pfam" id="PF10474">
    <property type="entry name" value="Syndetin_C"/>
    <property type="match status" value="1"/>
</dbReference>
<dbReference type="Pfam" id="PF10475">
    <property type="entry name" value="Vps54_N"/>
    <property type="match status" value="1"/>
</dbReference>
<proteinExistence type="evidence at protein level"/>
<organism>
    <name type="scientific">Rattus norvegicus</name>
    <name type="common">Rat</name>
    <dbReference type="NCBI Taxonomy" id="10116"/>
    <lineage>
        <taxon>Eukaryota</taxon>
        <taxon>Metazoa</taxon>
        <taxon>Chordata</taxon>
        <taxon>Craniata</taxon>
        <taxon>Vertebrata</taxon>
        <taxon>Euteleostomi</taxon>
        <taxon>Mammalia</taxon>
        <taxon>Eutheria</taxon>
        <taxon>Euarchontoglires</taxon>
        <taxon>Glires</taxon>
        <taxon>Rodentia</taxon>
        <taxon>Myomorpha</taxon>
        <taxon>Muroidea</taxon>
        <taxon>Muridae</taxon>
        <taxon>Murinae</taxon>
        <taxon>Rattus</taxon>
    </lineage>
</organism>